<reference key="1">
    <citation type="journal article" date="2006" name="Science">
        <title>Large-scale sequence analysis of avian influenza isolates.</title>
        <authorList>
            <person name="Obenauer J.C."/>
            <person name="Denson J."/>
            <person name="Mehta P.K."/>
            <person name="Su X."/>
            <person name="Mukatira S."/>
            <person name="Finkelstein D.B."/>
            <person name="Xu X."/>
            <person name="Wang J."/>
            <person name="Ma J."/>
            <person name="Fan Y."/>
            <person name="Rakestraw K.M."/>
            <person name="Webster R.G."/>
            <person name="Hoffmann E."/>
            <person name="Krauss S."/>
            <person name="Zheng J."/>
            <person name="Zhang Z."/>
            <person name="Naeve C.W."/>
        </authorList>
    </citation>
    <scope>NUCLEOTIDE SEQUENCE [GENOMIC RNA]</scope>
</reference>
<gene>
    <name type="primary">PA</name>
</gene>
<feature type="chain" id="PRO_0000419360" description="Protein PA-X">
    <location>
        <begin position="1"/>
        <end position="252"/>
    </location>
</feature>
<feature type="active site" evidence="2">
    <location>
        <position position="80"/>
    </location>
</feature>
<feature type="active site" evidence="2">
    <location>
        <position position="108"/>
    </location>
</feature>
<feature type="site" description="Important for efficient shutoff activity and nuclear localization" evidence="4">
    <location>
        <position position="195"/>
    </location>
</feature>
<feature type="site" description="Important for efficient shutoff activity and nuclear localization" evidence="4">
    <location>
        <position position="198"/>
    </location>
</feature>
<feature type="site" description="Important for efficient shutoff activity and nuclear localization" evidence="4">
    <location>
        <position position="199"/>
    </location>
</feature>
<feature type="site" description="Important for efficient shutoff activity" evidence="3">
    <location>
        <position position="202"/>
    </location>
</feature>
<feature type="site" description="Important for efficient shutoff activity" evidence="3">
    <location>
        <position position="203"/>
    </location>
</feature>
<feature type="site" description="Important for efficient shutoff activity" evidence="3">
    <location>
        <position position="206"/>
    </location>
</feature>
<name>PAX_I85A3</name>
<protein>
    <recommendedName>
        <fullName>Protein PA-X</fullName>
    </recommendedName>
</protein>
<organism>
    <name type="scientific">Influenza A virus (strain A/Chicken/Victoria/1/1985 H7N7)</name>
    <dbReference type="NCBI Taxonomy" id="402520"/>
    <lineage>
        <taxon>Viruses</taxon>
        <taxon>Riboviria</taxon>
        <taxon>Orthornavirae</taxon>
        <taxon>Negarnaviricota</taxon>
        <taxon>Polyploviricotina</taxon>
        <taxon>Insthoviricetes</taxon>
        <taxon>Articulavirales</taxon>
        <taxon>Orthomyxoviridae</taxon>
        <taxon>Alphainfluenzavirus</taxon>
        <taxon>Alphainfluenzavirus influenzae</taxon>
        <taxon>Influenza A virus</taxon>
    </lineage>
</organism>
<accession>P0CK77</accession>
<proteinExistence type="inferred from homology"/>
<dbReference type="EMBL" id="CY015024">
    <property type="status" value="NOT_ANNOTATED_CDS"/>
    <property type="molecule type" value="Genomic_RNA"/>
</dbReference>
<dbReference type="SMR" id="P0CK77"/>
<dbReference type="IntAct" id="P0CK77">
    <property type="interactions" value="1"/>
</dbReference>
<dbReference type="GO" id="GO:0003723">
    <property type="term" value="F:RNA binding"/>
    <property type="evidence" value="ECO:0007669"/>
    <property type="project" value="InterPro"/>
</dbReference>
<dbReference type="GO" id="GO:0039694">
    <property type="term" value="P:viral RNA genome replication"/>
    <property type="evidence" value="ECO:0007669"/>
    <property type="project" value="InterPro"/>
</dbReference>
<dbReference type="GO" id="GO:0075523">
    <property type="term" value="P:viral translational frameshifting"/>
    <property type="evidence" value="ECO:0007669"/>
    <property type="project" value="UniProtKB-KW"/>
</dbReference>
<dbReference type="FunFam" id="3.40.91.90:FF:000001">
    <property type="entry name" value="Polymerase acidic protein"/>
    <property type="match status" value="1"/>
</dbReference>
<dbReference type="Gene3D" id="3.40.91.90">
    <property type="entry name" value="Influenza RNA-dependent RNA polymerase subunit PA, endonuclease domain"/>
    <property type="match status" value="1"/>
</dbReference>
<dbReference type="InterPro" id="IPR001009">
    <property type="entry name" value="PA/PA-X"/>
</dbReference>
<dbReference type="InterPro" id="IPR038372">
    <property type="entry name" value="PA/PA-X_sf"/>
</dbReference>
<dbReference type="Pfam" id="PF00603">
    <property type="entry name" value="Flu_PA"/>
    <property type="match status" value="1"/>
</dbReference>
<keyword id="KW-1132">Decay of host mRNAs by virus</keyword>
<keyword id="KW-1262">Eukaryotic host gene expression shutoff by virus</keyword>
<keyword id="KW-1035">Host cytoplasm</keyword>
<keyword id="KW-1190">Host gene expression shutoff by virus</keyword>
<keyword id="KW-1192">Host mRNA suppression by virus</keyword>
<keyword id="KW-1048">Host nucleus</keyword>
<keyword id="KW-0945">Host-virus interaction</keyword>
<keyword id="KW-0688">Ribosomal frameshifting</keyword>
<organismHost>
    <name type="scientific">Aves</name>
    <dbReference type="NCBI Taxonomy" id="8782"/>
</organismHost>
<organismHost>
    <name type="scientific">Equus caballus</name>
    <name type="common">Horse</name>
    <dbReference type="NCBI Taxonomy" id="9796"/>
</organismHost>
<organismHost>
    <name type="scientific">Homo sapiens</name>
    <name type="common">Human</name>
    <dbReference type="NCBI Taxonomy" id="9606"/>
</organismHost>
<organismHost>
    <name type="scientific">Phocidae</name>
    <name type="common">true seals</name>
    <dbReference type="NCBI Taxonomy" id="9709"/>
</organismHost>
<sequence length="252" mass="29296">MEDFVRQCFNPIIVELAEKAMKEYGEDPKIETNKFAAICTHLEVCFMYSDFHFIDERGESIIVESGDPNALLKHRFEIIEGRDRTMAWTVVNSICNTTGVEKPKFLPDLYDYKENRFVEIGVTRREVHIYYLEKANKIKSEKTHIHIFSFTGEEMATKADYTLDEESRARIKTRLFTIRQEMASRGLWDSFVSPREAKKQLKKDLKLQEPCAGLPTKVSHRTSPALKTLEPMWMDSNRTAALRASFLKCPKK</sequence>
<comment type="function">
    <text evidence="1 4">Plays a major role in the shutoff of the host protein expression by cleaving mRNAs probably via an endonuclease activity. This host shutoff allows the virus to escape from the host antiviral response (By similarity). Hijacks host RNA splicing machinery to selectively target host RNAs containing introns for destruction. This may explain the preferential degradation of RNAs that have undergone co- or post-transcriptional processing (By similarity).</text>
</comment>
<comment type="subcellular location">
    <subcellularLocation>
        <location evidence="4">Host cytoplasm</location>
    </subcellularLocation>
    <subcellularLocation>
        <location evidence="4">Host nucleus</location>
    </subcellularLocation>
</comment>
<comment type="alternative products">
    <event type="ribosomal frameshifting"/>
    <isoform>
        <id>P0CK77-1</id>
        <name>PA-X</name>
        <sequence type="displayed"/>
    </isoform>
    <isoform>
        <id>Q0A2Q7-1</id>
        <name>PA</name>
        <sequence type="external"/>
    </isoform>
</comment>
<comment type="domain">
    <text evidence="1 4">The probable endonuclease active site in the N-terminus and the basic amino acid cluster in the C-terminus are important for the shutoff activity. The C-terminus acts as a nuclear localization signal (By similarity). The C-terminus is recruited to host protein complexes involved in nuclear Pol II RNA processing (By similarity).</text>
</comment>
<comment type="similarity">
    <text evidence="5">Belongs to the influenza viruses PA-X family.</text>
</comment>
<evidence type="ECO:0000250" key="1">
    <source>
        <dbReference type="UniProtKB" id="P0CK64"/>
    </source>
</evidence>
<evidence type="ECO:0000250" key="2">
    <source>
        <dbReference type="UniProtKB" id="P0CK68"/>
    </source>
</evidence>
<evidence type="ECO:0000250" key="3">
    <source>
        <dbReference type="UniProtKB" id="P0DJW8"/>
    </source>
</evidence>
<evidence type="ECO:0000250" key="4">
    <source>
        <dbReference type="UniProtKB" id="P0DXO5"/>
    </source>
</evidence>
<evidence type="ECO:0000305" key="5"/>